<accession>Q68W86</accession>
<name>RL29_RICTY</name>
<comment type="similarity">
    <text evidence="1">Belongs to the universal ribosomal protein uL29 family.</text>
</comment>
<protein>
    <recommendedName>
        <fullName evidence="1">Large ribosomal subunit protein uL29</fullName>
    </recommendedName>
    <alternativeName>
        <fullName evidence="2">50S ribosomal protein L29</fullName>
    </alternativeName>
</protein>
<feature type="chain" id="PRO_0000130446" description="Large ribosomal subunit protein uL29">
    <location>
        <begin position="1"/>
        <end position="71"/>
    </location>
</feature>
<proteinExistence type="inferred from homology"/>
<sequence>MNDLKLLRSKLSTETIEELYKNLNLLKKELFNLRFQQALGELKNTSRFSLVKKSIARIKTELTKRSNSEEY</sequence>
<organism>
    <name type="scientific">Rickettsia typhi (strain ATCC VR-144 / Wilmington)</name>
    <dbReference type="NCBI Taxonomy" id="257363"/>
    <lineage>
        <taxon>Bacteria</taxon>
        <taxon>Pseudomonadati</taxon>
        <taxon>Pseudomonadota</taxon>
        <taxon>Alphaproteobacteria</taxon>
        <taxon>Rickettsiales</taxon>
        <taxon>Rickettsiaceae</taxon>
        <taxon>Rickettsieae</taxon>
        <taxon>Rickettsia</taxon>
        <taxon>typhus group</taxon>
    </lineage>
</organism>
<gene>
    <name evidence="1" type="primary">rpmC</name>
    <name type="ordered locus">RT0643</name>
</gene>
<reference key="1">
    <citation type="journal article" date="2004" name="J. Bacteriol.">
        <title>Complete genome sequence of Rickettsia typhi and comparison with sequences of other Rickettsiae.</title>
        <authorList>
            <person name="McLeod M.P."/>
            <person name="Qin X."/>
            <person name="Karpathy S.E."/>
            <person name="Gioia J."/>
            <person name="Highlander S.K."/>
            <person name="Fox G.E."/>
            <person name="McNeill T.Z."/>
            <person name="Jiang H."/>
            <person name="Muzny D."/>
            <person name="Jacob L.S."/>
            <person name="Hawes A.C."/>
            <person name="Sodergren E."/>
            <person name="Gill R."/>
            <person name="Hume J."/>
            <person name="Morgan M."/>
            <person name="Fan G."/>
            <person name="Amin A.G."/>
            <person name="Gibbs R.A."/>
            <person name="Hong C."/>
            <person name="Yu X.-J."/>
            <person name="Walker D.H."/>
            <person name="Weinstock G.M."/>
        </authorList>
    </citation>
    <scope>NUCLEOTIDE SEQUENCE [LARGE SCALE GENOMIC DNA]</scope>
    <source>
        <strain>ATCC VR-144 / Wilmington</strain>
    </source>
</reference>
<dbReference type="EMBL" id="AE017197">
    <property type="protein sequence ID" value="AAU04106.1"/>
    <property type="molecule type" value="Genomic_DNA"/>
</dbReference>
<dbReference type="RefSeq" id="WP_004596213.1">
    <property type="nucleotide sequence ID" value="NC_006142.1"/>
</dbReference>
<dbReference type="SMR" id="Q68W86"/>
<dbReference type="GeneID" id="57569776"/>
<dbReference type="KEGG" id="rty:RT0643"/>
<dbReference type="eggNOG" id="COG0255">
    <property type="taxonomic scope" value="Bacteria"/>
</dbReference>
<dbReference type="HOGENOM" id="CLU_158491_1_0_5"/>
<dbReference type="OrthoDB" id="9815192at2"/>
<dbReference type="Proteomes" id="UP000000604">
    <property type="component" value="Chromosome"/>
</dbReference>
<dbReference type="GO" id="GO:0022625">
    <property type="term" value="C:cytosolic large ribosomal subunit"/>
    <property type="evidence" value="ECO:0007669"/>
    <property type="project" value="TreeGrafter"/>
</dbReference>
<dbReference type="GO" id="GO:0003735">
    <property type="term" value="F:structural constituent of ribosome"/>
    <property type="evidence" value="ECO:0007669"/>
    <property type="project" value="InterPro"/>
</dbReference>
<dbReference type="GO" id="GO:0006412">
    <property type="term" value="P:translation"/>
    <property type="evidence" value="ECO:0007669"/>
    <property type="project" value="UniProtKB-UniRule"/>
</dbReference>
<dbReference type="CDD" id="cd00427">
    <property type="entry name" value="Ribosomal_L29_HIP"/>
    <property type="match status" value="1"/>
</dbReference>
<dbReference type="FunFam" id="1.10.287.310:FF:000001">
    <property type="entry name" value="50S ribosomal protein L29"/>
    <property type="match status" value="1"/>
</dbReference>
<dbReference type="Gene3D" id="1.10.287.310">
    <property type="match status" value="1"/>
</dbReference>
<dbReference type="HAMAP" id="MF_00374">
    <property type="entry name" value="Ribosomal_uL29"/>
    <property type="match status" value="1"/>
</dbReference>
<dbReference type="InterPro" id="IPR050063">
    <property type="entry name" value="Ribosomal_protein_uL29"/>
</dbReference>
<dbReference type="InterPro" id="IPR001854">
    <property type="entry name" value="Ribosomal_uL29"/>
</dbReference>
<dbReference type="InterPro" id="IPR018254">
    <property type="entry name" value="Ribosomal_uL29_CS"/>
</dbReference>
<dbReference type="InterPro" id="IPR036049">
    <property type="entry name" value="Ribosomal_uL29_sf"/>
</dbReference>
<dbReference type="NCBIfam" id="TIGR00012">
    <property type="entry name" value="L29"/>
    <property type="match status" value="1"/>
</dbReference>
<dbReference type="PANTHER" id="PTHR10916">
    <property type="entry name" value="60S RIBOSOMAL PROTEIN L35/50S RIBOSOMAL PROTEIN L29"/>
    <property type="match status" value="1"/>
</dbReference>
<dbReference type="PANTHER" id="PTHR10916:SF0">
    <property type="entry name" value="LARGE RIBOSOMAL SUBUNIT PROTEIN UL29C"/>
    <property type="match status" value="1"/>
</dbReference>
<dbReference type="Pfam" id="PF00831">
    <property type="entry name" value="Ribosomal_L29"/>
    <property type="match status" value="1"/>
</dbReference>
<dbReference type="SUPFAM" id="SSF46561">
    <property type="entry name" value="Ribosomal protein L29 (L29p)"/>
    <property type="match status" value="1"/>
</dbReference>
<dbReference type="PROSITE" id="PS00579">
    <property type="entry name" value="RIBOSOMAL_L29"/>
    <property type="match status" value="1"/>
</dbReference>
<evidence type="ECO:0000255" key="1">
    <source>
        <dbReference type="HAMAP-Rule" id="MF_00374"/>
    </source>
</evidence>
<evidence type="ECO:0000305" key="2"/>
<keyword id="KW-0687">Ribonucleoprotein</keyword>
<keyword id="KW-0689">Ribosomal protein</keyword>